<dbReference type="EC" id="2.1.1.163" evidence="1"/>
<dbReference type="EC" id="2.1.1.201" evidence="1"/>
<dbReference type="EMBL" id="BX897700">
    <property type="protein sequence ID" value="CAF25543.1"/>
    <property type="molecule type" value="Genomic_DNA"/>
</dbReference>
<dbReference type="RefSeq" id="WP_011178871.1">
    <property type="nucleotide sequence ID" value="NC_005955.1"/>
</dbReference>
<dbReference type="SMR" id="Q6G1I2"/>
<dbReference type="KEGG" id="bqu:BQ00360"/>
<dbReference type="eggNOG" id="COG2226">
    <property type="taxonomic scope" value="Bacteria"/>
</dbReference>
<dbReference type="HOGENOM" id="CLU_037990_0_0_5"/>
<dbReference type="OrthoDB" id="9808140at2"/>
<dbReference type="UniPathway" id="UPA00079">
    <property type="reaction ID" value="UER00169"/>
</dbReference>
<dbReference type="UniPathway" id="UPA00232"/>
<dbReference type="Proteomes" id="UP000000597">
    <property type="component" value="Chromosome"/>
</dbReference>
<dbReference type="GO" id="GO:0008425">
    <property type="term" value="F:2-methoxy-6-polyprenyl-1,4-benzoquinol methyltransferase activity"/>
    <property type="evidence" value="ECO:0007669"/>
    <property type="project" value="UniProtKB-UniRule"/>
</dbReference>
<dbReference type="GO" id="GO:0043770">
    <property type="term" value="F:demethylmenaquinone methyltransferase activity"/>
    <property type="evidence" value="ECO:0007669"/>
    <property type="project" value="UniProtKB-UniRule"/>
</dbReference>
<dbReference type="GO" id="GO:0009060">
    <property type="term" value="P:aerobic respiration"/>
    <property type="evidence" value="ECO:0007669"/>
    <property type="project" value="UniProtKB-UniRule"/>
</dbReference>
<dbReference type="GO" id="GO:0009234">
    <property type="term" value="P:menaquinone biosynthetic process"/>
    <property type="evidence" value="ECO:0007669"/>
    <property type="project" value="UniProtKB-UniRule"/>
</dbReference>
<dbReference type="GO" id="GO:0032259">
    <property type="term" value="P:methylation"/>
    <property type="evidence" value="ECO:0007669"/>
    <property type="project" value="UniProtKB-KW"/>
</dbReference>
<dbReference type="CDD" id="cd02440">
    <property type="entry name" value="AdoMet_MTases"/>
    <property type="match status" value="1"/>
</dbReference>
<dbReference type="Gene3D" id="3.40.50.150">
    <property type="entry name" value="Vaccinia Virus protein VP39"/>
    <property type="match status" value="1"/>
</dbReference>
<dbReference type="HAMAP" id="MF_01813">
    <property type="entry name" value="MenG_UbiE_methyltr"/>
    <property type="match status" value="1"/>
</dbReference>
<dbReference type="InterPro" id="IPR029063">
    <property type="entry name" value="SAM-dependent_MTases_sf"/>
</dbReference>
<dbReference type="InterPro" id="IPR004033">
    <property type="entry name" value="UbiE/COQ5_MeTrFase"/>
</dbReference>
<dbReference type="InterPro" id="IPR023576">
    <property type="entry name" value="UbiE/COQ5_MeTrFase_CS"/>
</dbReference>
<dbReference type="NCBIfam" id="TIGR01934">
    <property type="entry name" value="MenG_MenH_UbiE"/>
    <property type="match status" value="1"/>
</dbReference>
<dbReference type="NCBIfam" id="NF001242">
    <property type="entry name" value="PRK00216.1-3"/>
    <property type="match status" value="1"/>
</dbReference>
<dbReference type="NCBIfam" id="NF001244">
    <property type="entry name" value="PRK00216.1-5"/>
    <property type="match status" value="1"/>
</dbReference>
<dbReference type="PANTHER" id="PTHR43591:SF24">
    <property type="entry name" value="2-METHOXY-6-POLYPRENYL-1,4-BENZOQUINOL METHYLASE, MITOCHONDRIAL"/>
    <property type="match status" value="1"/>
</dbReference>
<dbReference type="PANTHER" id="PTHR43591">
    <property type="entry name" value="METHYLTRANSFERASE"/>
    <property type="match status" value="1"/>
</dbReference>
<dbReference type="Pfam" id="PF01209">
    <property type="entry name" value="Ubie_methyltran"/>
    <property type="match status" value="1"/>
</dbReference>
<dbReference type="SUPFAM" id="SSF53335">
    <property type="entry name" value="S-adenosyl-L-methionine-dependent methyltransferases"/>
    <property type="match status" value="1"/>
</dbReference>
<dbReference type="PROSITE" id="PS51608">
    <property type="entry name" value="SAM_MT_UBIE"/>
    <property type="match status" value="1"/>
</dbReference>
<dbReference type="PROSITE" id="PS01183">
    <property type="entry name" value="UBIE_1"/>
    <property type="match status" value="1"/>
</dbReference>
<dbReference type="PROSITE" id="PS01184">
    <property type="entry name" value="UBIE_2"/>
    <property type="match status" value="1"/>
</dbReference>
<keyword id="KW-0474">Menaquinone biosynthesis</keyword>
<keyword id="KW-0489">Methyltransferase</keyword>
<keyword id="KW-0949">S-adenosyl-L-methionine</keyword>
<keyword id="KW-0808">Transferase</keyword>
<keyword id="KW-0831">Ubiquinone biosynthesis</keyword>
<protein>
    <recommendedName>
        <fullName evidence="1">Ubiquinone/menaquinone biosynthesis C-methyltransferase UbiE</fullName>
        <ecNumber evidence="1">2.1.1.163</ecNumber>
        <ecNumber evidence="1">2.1.1.201</ecNumber>
    </recommendedName>
    <alternativeName>
        <fullName evidence="1">2-methoxy-6-polyprenyl-1,4-benzoquinol methylase</fullName>
    </alternativeName>
    <alternativeName>
        <fullName evidence="1">Demethylmenaquinone methyltransferase</fullName>
    </alternativeName>
</protein>
<evidence type="ECO:0000255" key="1">
    <source>
        <dbReference type="HAMAP-Rule" id="MF_01813"/>
    </source>
</evidence>
<gene>
    <name evidence="1" type="primary">ubiE</name>
    <name type="ordered locus">BQ00360</name>
</gene>
<proteinExistence type="inferred from homology"/>
<comment type="function">
    <text evidence="1">Methyltransferase required for the conversion of demethylmenaquinol (DMKH2) to menaquinol (MKH2) and the conversion of 2-polyprenyl-6-methoxy-1,4-benzoquinol (DDMQH2) to 2-polyprenyl-3-methyl-6-methoxy-1,4-benzoquinol (DMQH2).</text>
</comment>
<comment type="catalytic activity">
    <reaction evidence="1">
        <text>a 2-demethylmenaquinol + S-adenosyl-L-methionine = a menaquinol + S-adenosyl-L-homocysteine + H(+)</text>
        <dbReference type="Rhea" id="RHEA:42640"/>
        <dbReference type="Rhea" id="RHEA-COMP:9539"/>
        <dbReference type="Rhea" id="RHEA-COMP:9563"/>
        <dbReference type="ChEBI" id="CHEBI:15378"/>
        <dbReference type="ChEBI" id="CHEBI:18151"/>
        <dbReference type="ChEBI" id="CHEBI:55437"/>
        <dbReference type="ChEBI" id="CHEBI:57856"/>
        <dbReference type="ChEBI" id="CHEBI:59789"/>
        <dbReference type="EC" id="2.1.1.163"/>
    </reaction>
</comment>
<comment type="catalytic activity">
    <reaction evidence="1">
        <text>a 2-methoxy-6-(all-trans-polyprenyl)benzene-1,4-diol + S-adenosyl-L-methionine = a 5-methoxy-2-methyl-3-(all-trans-polyprenyl)benzene-1,4-diol + S-adenosyl-L-homocysteine + H(+)</text>
        <dbReference type="Rhea" id="RHEA:28286"/>
        <dbReference type="Rhea" id="RHEA-COMP:10858"/>
        <dbReference type="Rhea" id="RHEA-COMP:10859"/>
        <dbReference type="ChEBI" id="CHEBI:15378"/>
        <dbReference type="ChEBI" id="CHEBI:57856"/>
        <dbReference type="ChEBI" id="CHEBI:59789"/>
        <dbReference type="ChEBI" id="CHEBI:84166"/>
        <dbReference type="ChEBI" id="CHEBI:84167"/>
        <dbReference type="EC" id="2.1.1.201"/>
    </reaction>
</comment>
<comment type="pathway">
    <text evidence="1">Quinol/quinone metabolism; menaquinone biosynthesis; menaquinol from 1,4-dihydroxy-2-naphthoate: step 2/2.</text>
</comment>
<comment type="pathway">
    <text evidence="1">Cofactor biosynthesis; ubiquinone biosynthesis.</text>
</comment>
<comment type="similarity">
    <text evidence="1">Belongs to the class I-like SAM-binding methyltransferase superfamily. MenG/UbiE family.</text>
</comment>
<sequence length="260" mass="29168">MTAETERIGVKGGMEYSFGFTKIDEAQKQSMVDGVFHSVAENYDKMNDILSLGLHRTWKNSMVAWLSPPALSNWKVLDVAGGTGDIAFRILNASRKKAHATVLDINSSMLSVGKKRAQKNGLAPLTDFVEANAEHLPFEDQSFDAYTIAFGIRNVPHINQALREAFRVLKPGGRFLCLEFSNVEMPLLNKIYDLWSFHVIPKLGQFIADNGDAYRYLVESIRKFPKQDDFSHMLNHAGFSRVSYRNLTGAIAALHSAWKI</sequence>
<name>UBIE_BARQU</name>
<feature type="chain" id="PRO_0000193250" description="Ubiquinone/menaquinone biosynthesis C-methyltransferase UbiE">
    <location>
        <begin position="1"/>
        <end position="260"/>
    </location>
</feature>
<feature type="binding site" evidence="1">
    <location>
        <position position="83"/>
    </location>
    <ligand>
        <name>S-adenosyl-L-methionine</name>
        <dbReference type="ChEBI" id="CHEBI:59789"/>
    </ligand>
</feature>
<feature type="binding site" evidence="1">
    <location>
        <position position="104"/>
    </location>
    <ligand>
        <name>S-adenosyl-L-methionine</name>
        <dbReference type="ChEBI" id="CHEBI:59789"/>
    </ligand>
</feature>
<feature type="binding site" evidence="1">
    <location>
        <begin position="132"/>
        <end position="133"/>
    </location>
    <ligand>
        <name>S-adenosyl-L-methionine</name>
        <dbReference type="ChEBI" id="CHEBI:59789"/>
    </ligand>
</feature>
<organism>
    <name type="scientific">Bartonella quintana (strain Toulouse)</name>
    <name type="common">Rochalimaea quintana</name>
    <dbReference type="NCBI Taxonomy" id="283165"/>
    <lineage>
        <taxon>Bacteria</taxon>
        <taxon>Pseudomonadati</taxon>
        <taxon>Pseudomonadota</taxon>
        <taxon>Alphaproteobacteria</taxon>
        <taxon>Hyphomicrobiales</taxon>
        <taxon>Bartonellaceae</taxon>
        <taxon>Bartonella</taxon>
    </lineage>
</organism>
<accession>Q6G1I2</accession>
<reference key="1">
    <citation type="journal article" date="2004" name="Proc. Natl. Acad. Sci. U.S.A.">
        <title>The louse-borne human pathogen Bartonella quintana is a genomic derivative of the zoonotic agent Bartonella henselae.</title>
        <authorList>
            <person name="Alsmark U.C.M."/>
            <person name="Frank A.C."/>
            <person name="Karlberg E.O."/>
            <person name="Legault B.-A."/>
            <person name="Ardell D.H."/>
            <person name="Canbaeck B."/>
            <person name="Eriksson A.-S."/>
            <person name="Naeslund A.K."/>
            <person name="Handley S.A."/>
            <person name="Huvet M."/>
            <person name="La Scola B."/>
            <person name="Holmberg M."/>
            <person name="Andersson S.G.E."/>
        </authorList>
    </citation>
    <scope>NUCLEOTIDE SEQUENCE [LARGE SCALE GENOMIC DNA]</scope>
    <source>
        <strain>Toulouse</strain>
    </source>
</reference>